<organism>
    <name type="scientific">Escherichia coli O157:H7</name>
    <dbReference type="NCBI Taxonomy" id="83334"/>
    <lineage>
        <taxon>Bacteria</taxon>
        <taxon>Pseudomonadati</taxon>
        <taxon>Pseudomonadota</taxon>
        <taxon>Gammaproteobacteria</taxon>
        <taxon>Enterobacterales</taxon>
        <taxon>Enterobacteriaceae</taxon>
        <taxon>Escherichia</taxon>
    </lineage>
</organism>
<feature type="chain" id="PRO_0000060006" description="Dipeptide transport system permease protein DppB">
    <location>
        <begin position="1"/>
        <end position="339"/>
    </location>
</feature>
<feature type="topological domain" description="Periplasmic" evidence="2">
    <location>
        <begin position="1"/>
        <end position="9"/>
    </location>
</feature>
<feature type="transmembrane region" description="Helical" evidence="3">
    <location>
        <begin position="10"/>
        <end position="30"/>
    </location>
</feature>
<feature type="topological domain" description="Cytoplasmic" evidence="2">
    <location>
        <begin position="31"/>
        <end position="102"/>
    </location>
</feature>
<feature type="transmembrane region" description="Helical" evidence="3">
    <location>
        <begin position="103"/>
        <end position="123"/>
    </location>
</feature>
<feature type="topological domain" description="Periplasmic" evidence="2">
    <location>
        <begin position="124"/>
        <end position="135"/>
    </location>
</feature>
<feature type="transmembrane region" description="Helical" evidence="3">
    <location>
        <begin position="136"/>
        <end position="156"/>
    </location>
</feature>
<feature type="topological domain" description="Cytoplasmic" evidence="2">
    <location>
        <begin position="157"/>
        <end position="171"/>
    </location>
</feature>
<feature type="transmembrane region" description="Helical" evidence="3">
    <location>
        <begin position="172"/>
        <end position="192"/>
    </location>
</feature>
<feature type="topological domain" description="Periplasmic" evidence="2">
    <location>
        <begin position="193"/>
        <end position="200"/>
    </location>
</feature>
<feature type="transmembrane region" description="Helical" evidence="3">
    <location>
        <begin position="201"/>
        <end position="221"/>
    </location>
</feature>
<feature type="topological domain" description="Cytoplasmic" evidence="2">
    <location>
        <begin position="222"/>
        <end position="259"/>
    </location>
</feature>
<feature type="transmembrane region" description="Helical" evidence="3">
    <location>
        <begin position="260"/>
        <end position="280"/>
    </location>
</feature>
<feature type="topological domain" description="Periplasmic" evidence="2">
    <location>
        <begin position="281"/>
        <end position="309"/>
    </location>
</feature>
<feature type="transmembrane region" description="Helical" evidence="3">
    <location>
        <begin position="310"/>
        <end position="330"/>
    </location>
</feature>
<feature type="topological domain" description="Cytoplasmic" evidence="2">
    <location>
        <begin position="331"/>
        <end position="339"/>
    </location>
</feature>
<feature type="domain" description="ABC transmembrane type-1" evidence="3">
    <location>
        <begin position="96"/>
        <end position="328"/>
    </location>
</feature>
<keyword id="KW-0997">Cell inner membrane</keyword>
<keyword id="KW-1003">Cell membrane</keyword>
<keyword id="KW-0472">Membrane</keyword>
<keyword id="KW-0571">Peptide transport</keyword>
<keyword id="KW-0653">Protein transport</keyword>
<keyword id="KW-1185">Reference proteome</keyword>
<keyword id="KW-0812">Transmembrane</keyword>
<keyword id="KW-1133">Transmembrane helix</keyword>
<keyword id="KW-0813">Transport</keyword>
<accession>P0AEG0</accession>
<accession>P37316</accession>
<protein>
    <recommendedName>
        <fullName evidence="1">Dipeptide transport system permease protein DppB</fullName>
    </recommendedName>
</protein>
<name>DPPB_ECO57</name>
<reference key="1">
    <citation type="journal article" date="2001" name="Nature">
        <title>Genome sequence of enterohaemorrhagic Escherichia coli O157:H7.</title>
        <authorList>
            <person name="Perna N.T."/>
            <person name="Plunkett G. III"/>
            <person name="Burland V."/>
            <person name="Mau B."/>
            <person name="Glasner J.D."/>
            <person name="Rose D.J."/>
            <person name="Mayhew G.F."/>
            <person name="Evans P.S."/>
            <person name="Gregor J."/>
            <person name="Kirkpatrick H.A."/>
            <person name="Posfai G."/>
            <person name="Hackett J."/>
            <person name="Klink S."/>
            <person name="Boutin A."/>
            <person name="Shao Y."/>
            <person name="Miller L."/>
            <person name="Grotbeck E.J."/>
            <person name="Davis N.W."/>
            <person name="Lim A."/>
            <person name="Dimalanta E.T."/>
            <person name="Potamousis K."/>
            <person name="Apodaca J."/>
            <person name="Anantharaman T.S."/>
            <person name="Lin J."/>
            <person name="Yen G."/>
            <person name="Schwartz D.C."/>
            <person name="Welch R.A."/>
            <person name="Blattner F.R."/>
        </authorList>
    </citation>
    <scope>NUCLEOTIDE SEQUENCE [LARGE SCALE GENOMIC DNA]</scope>
    <source>
        <strain>O157:H7 / EDL933 / ATCC 700927 / EHEC</strain>
    </source>
</reference>
<reference key="2">
    <citation type="journal article" date="2001" name="DNA Res.">
        <title>Complete genome sequence of enterohemorrhagic Escherichia coli O157:H7 and genomic comparison with a laboratory strain K-12.</title>
        <authorList>
            <person name="Hayashi T."/>
            <person name="Makino K."/>
            <person name="Ohnishi M."/>
            <person name="Kurokawa K."/>
            <person name="Ishii K."/>
            <person name="Yokoyama K."/>
            <person name="Han C.-G."/>
            <person name="Ohtsubo E."/>
            <person name="Nakayama K."/>
            <person name="Murata T."/>
            <person name="Tanaka M."/>
            <person name="Tobe T."/>
            <person name="Iida T."/>
            <person name="Takami H."/>
            <person name="Honda T."/>
            <person name="Sasakawa C."/>
            <person name="Ogasawara N."/>
            <person name="Yasunaga T."/>
            <person name="Kuhara S."/>
            <person name="Shiba T."/>
            <person name="Hattori M."/>
            <person name="Shinagawa H."/>
        </authorList>
    </citation>
    <scope>NUCLEOTIDE SEQUENCE [LARGE SCALE GENOMIC DNA]</scope>
    <source>
        <strain>O157:H7 / Sakai / RIMD 0509952 / EHEC</strain>
    </source>
</reference>
<comment type="function">
    <text evidence="1">Part of the ABC transporter DppABCDF involved in dipeptide transport. Responsible for the translocation of the substrate across the membrane.</text>
</comment>
<comment type="subunit">
    <text evidence="1">The complex is composed of two ATP-binding proteins (DppD and DppF), two transmembrane proteins (DppB and DppC) and a solute-binding protein (DppA).</text>
</comment>
<comment type="subcellular location">
    <subcellularLocation>
        <location evidence="1">Cell inner membrane</location>
        <topology evidence="2">Multi-pass membrane protein</topology>
    </subcellularLocation>
</comment>
<comment type="similarity">
    <text evidence="4">Belongs to the binding-protein-dependent transport system permease family. OppBC subfamily.</text>
</comment>
<proteinExistence type="inferred from homology"/>
<gene>
    <name type="primary">dppB</name>
    <name type="ordered locus">Z4960</name>
    <name type="ordered locus">ECs4423</name>
</gene>
<evidence type="ECO:0000250" key="1">
    <source>
        <dbReference type="UniProtKB" id="P0AEF8"/>
    </source>
</evidence>
<evidence type="ECO:0000255" key="2"/>
<evidence type="ECO:0000255" key="3">
    <source>
        <dbReference type="PROSITE-ProRule" id="PRU00441"/>
    </source>
</evidence>
<evidence type="ECO:0000305" key="4"/>
<sequence>MLQFILRRLGLVIPTFIGITLLTFAFVHMIPGDPVMIMAGERGISPERHAQLLAELGLDKPMWQQYLHYIWGVMHGDLGISMKSRIPVWEEFVPRFQATLELGVCAMIFATAVGIPVGVLAAVKRGSIFDHTAVGLALTGYSMPIFWWGMMLIMLVSVHWNLTPVSGRVSDMVFLDDSNPLTGFMLIDTAIWGEDGNFIDAVAHMILPAIVLGTIPLAVIVRMTRSSMLEVLGEDYIRTARAKGLTRMRVIIVHALRNAMLPVVTVIGLQVGTLLAGAILTETIFSWPGLGRWLIDALQRRDYPVVQGGVLLVATMIILVNLLVDLLYGVVNPRIRHKK</sequence>
<dbReference type="EMBL" id="AE005174">
    <property type="protein sequence ID" value="AAG58687.1"/>
    <property type="molecule type" value="Genomic_DNA"/>
</dbReference>
<dbReference type="EMBL" id="BA000007">
    <property type="protein sequence ID" value="BAB37846.1"/>
    <property type="molecule type" value="Genomic_DNA"/>
</dbReference>
<dbReference type="PIR" id="C86028">
    <property type="entry name" value="C86028"/>
</dbReference>
<dbReference type="PIR" id="G91181">
    <property type="entry name" value="G91181"/>
</dbReference>
<dbReference type="RefSeq" id="NP_312450.1">
    <property type="nucleotide sequence ID" value="NC_002695.1"/>
</dbReference>
<dbReference type="RefSeq" id="WP_000938855.1">
    <property type="nucleotide sequence ID" value="NZ_VOAI01000004.1"/>
</dbReference>
<dbReference type="SMR" id="P0AEG0"/>
<dbReference type="STRING" id="155864.Z4960"/>
<dbReference type="GeneID" id="915716"/>
<dbReference type="GeneID" id="93778271"/>
<dbReference type="KEGG" id="ece:Z4960"/>
<dbReference type="KEGG" id="ecs:ECs_4423"/>
<dbReference type="PATRIC" id="fig|386585.9.peg.4627"/>
<dbReference type="eggNOG" id="COG0601">
    <property type="taxonomic scope" value="Bacteria"/>
</dbReference>
<dbReference type="HOGENOM" id="CLU_036879_0_0_6"/>
<dbReference type="OMA" id="PPVTGFM"/>
<dbReference type="Proteomes" id="UP000000558">
    <property type="component" value="Chromosome"/>
</dbReference>
<dbReference type="Proteomes" id="UP000002519">
    <property type="component" value="Chromosome"/>
</dbReference>
<dbReference type="GO" id="GO:0005886">
    <property type="term" value="C:plasma membrane"/>
    <property type="evidence" value="ECO:0007669"/>
    <property type="project" value="UniProtKB-SubCell"/>
</dbReference>
<dbReference type="GO" id="GO:0071916">
    <property type="term" value="F:dipeptide transmembrane transporter activity"/>
    <property type="evidence" value="ECO:0007669"/>
    <property type="project" value="TreeGrafter"/>
</dbReference>
<dbReference type="GO" id="GO:0015031">
    <property type="term" value="P:protein transport"/>
    <property type="evidence" value="ECO:0007669"/>
    <property type="project" value="UniProtKB-KW"/>
</dbReference>
<dbReference type="CDD" id="cd06261">
    <property type="entry name" value="TM_PBP2"/>
    <property type="match status" value="1"/>
</dbReference>
<dbReference type="Gene3D" id="1.10.3720.10">
    <property type="entry name" value="MetI-like"/>
    <property type="match status" value="1"/>
</dbReference>
<dbReference type="InterPro" id="IPR045621">
    <property type="entry name" value="BPD_transp_1_N"/>
</dbReference>
<dbReference type="InterPro" id="IPR000515">
    <property type="entry name" value="MetI-like"/>
</dbReference>
<dbReference type="InterPro" id="IPR035906">
    <property type="entry name" value="MetI-like_sf"/>
</dbReference>
<dbReference type="NCBIfam" id="NF008161">
    <property type="entry name" value="PRK10914.1"/>
    <property type="match status" value="1"/>
</dbReference>
<dbReference type="PANTHER" id="PTHR43163">
    <property type="entry name" value="DIPEPTIDE TRANSPORT SYSTEM PERMEASE PROTEIN DPPB-RELATED"/>
    <property type="match status" value="1"/>
</dbReference>
<dbReference type="PANTHER" id="PTHR43163:SF6">
    <property type="entry name" value="DIPEPTIDE TRANSPORT SYSTEM PERMEASE PROTEIN DPPB-RELATED"/>
    <property type="match status" value="1"/>
</dbReference>
<dbReference type="Pfam" id="PF00528">
    <property type="entry name" value="BPD_transp_1"/>
    <property type="match status" value="1"/>
</dbReference>
<dbReference type="Pfam" id="PF19300">
    <property type="entry name" value="BPD_transp_1_N"/>
    <property type="match status" value="1"/>
</dbReference>
<dbReference type="SUPFAM" id="SSF161098">
    <property type="entry name" value="MetI-like"/>
    <property type="match status" value="1"/>
</dbReference>
<dbReference type="PROSITE" id="PS50928">
    <property type="entry name" value="ABC_TM1"/>
    <property type="match status" value="1"/>
</dbReference>